<keyword id="KW-0028">Amino-acid biosynthesis</keyword>
<keyword id="KW-0198">Cysteine biosynthesis</keyword>
<keyword id="KW-0249">Electron transport</keyword>
<keyword id="KW-0274">FAD</keyword>
<keyword id="KW-0285">Flavoprotein</keyword>
<keyword id="KW-0288">FMN</keyword>
<keyword id="KW-0521">NADP</keyword>
<keyword id="KW-0560">Oxidoreductase</keyword>
<keyword id="KW-0813">Transport</keyword>
<name>CYSJ_SALPA</name>
<comment type="function">
    <text evidence="2">Component of the sulfite reductase complex that catalyzes the 6-electron reduction of sulfite to sulfide. This is one of several activities required for the biosynthesis of L-cysteine from sulfate. The flavoprotein component catalyzes the electron flow from NADPH -&gt; FAD -&gt; FMN to the hemoprotein component.</text>
</comment>
<comment type="catalytic activity">
    <reaction evidence="2">
        <text>hydrogen sulfide + 3 NADP(+) + 3 H2O = sulfite + 3 NADPH + 4 H(+)</text>
        <dbReference type="Rhea" id="RHEA:13801"/>
        <dbReference type="ChEBI" id="CHEBI:15377"/>
        <dbReference type="ChEBI" id="CHEBI:15378"/>
        <dbReference type="ChEBI" id="CHEBI:17359"/>
        <dbReference type="ChEBI" id="CHEBI:29919"/>
        <dbReference type="ChEBI" id="CHEBI:57783"/>
        <dbReference type="ChEBI" id="CHEBI:58349"/>
        <dbReference type="EC" id="1.8.1.2"/>
    </reaction>
</comment>
<comment type="cofactor">
    <cofactor evidence="2">
        <name>FAD</name>
        <dbReference type="ChEBI" id="CHEBI:57692"/>
    </cofactor>
    <text evidence="2">Binds 1 FAD per subunit.</text>
</comment>
<comment type="cofactor">
    <cofactor evidence="2">
        <name>FMN</name>
        <dbReference type="ChEBI" id="CHEBI:58210"/>
    </cofactor>
    <text evidence="2">Binds 1 FMN per subunit.</text>
</comment>
<comment type="pathway">
    <text evidence="2">Sulfur metabolism; hydrogen sulfide biosynthesis; hydrogen sulfide from sulfite (NADPH route): step 1/1.</text>
</comment>
<comment type="subunit">
    <text evidence="2">Alpha(8)-beta(8). The alpha component is a flavoprotein, the beta component is a hemoprotein.</text>
</comment>
<comment type="similarity">
    <text evidence="2">Belongs to the NADPH-dependent sulphite reductase flavoprotein subunit CysJ family.</text>
</comment>
<comment type="similarity">
    <text evidence="2">In the N-terminal section; belongs to the flavodoxin family.</text>
</comment>
<comment type="similarity">
    <text evidence="2">In the C-terminal section; belongs to the flavoprotein pyridine nucleotide cytochrome reductase family.</text>
</comment>
<accession>Q5PEH7</accession>
<organism>
    <name type="scientific">Salmonella paratyphi A (strain ATCC 9150 / SARB42)</name>
    <dbReference type="NCBI Taxonomy" id="295319"/>
    <lineage>
        <taxon>Bacteria</taxon>
        <taxon>Pseudomonadati</taxon>
        <taxon>Pseudomonadota</taxon>
        <taxon>Gammaproteobacteria</taxon>
        <taxon>Enterobacterales</taxon>
        <taxon>Enterobacteriaceae</taxon>
        <taxon>Salmonella</taxon>
    </lineage>
</organism>
<proteinExistence type="inferred from homology"/>
<evidence type="ECO:0000250" key="1"/>
<evidence type="ECO:0000255" key="2">
    <source>
        <dbReference type="HAMAP-Rule" id="MF_01541"/>
    </source>
</evidence>
<feature type="initiator methionine" description="Removed" evidence="1">
    <location>
        <position position="1"/>
    </location>
</feature>
<feature type="chain" id="PRO_0000199933" description="Sulfite reductase [NADPH] flavoprotein alpha-component">
    <location>
        <begin position="2"/>
        <end position="599"/>
    </location>
</feature>
<feature type="domain" description="Flavodoxin-like" evidence="2">
    <location>
        <begin position="64"/>
        <end position="202"/>
    </location>
</feature>
<feature type="domain" description="FAD-binding FR-type" evidence="2">
    <location>
        <begin position="234"/>
        <end position="448"/>
    </location>
</feature>
<feature type="binding site" evidence="2">
    <location>
        <begin position="70"/>
        <end position="75"/>
    </location>
    <ligand>
        <name>FMN</name>
        <dbReference type="ChEBI" id="CHEBI:58210"/>
    </ligand>
</feature>
<feature type="binding site" evidence="2">
    <location>
        <begin position="117"/>
        <end position="120"/>
    </location>
    <ligand>
        <name>FMN</name>
        <dbReference type="ChEBI" id="CHEBI:58210"/>
    </ligand>
</feature>
<feature type="binding site" evidence="2">
    <location>
        <begin position="153"/>
        <end position="162"/>
    </location>
    <ligand>
        <name>FMN</name>
        <dbReference type="ChEBI" id="CHEBI:58210"/>
    </ligand>
</feature>
<feature type="binding site" evidence="2">
    <location>
        <position position="322"/>
    </location>
    <ligand>
        <name>FAD</name>
        <dbReference type="ChEBI" id="CHEBI:57692"/>
    </ligand>
</feature>
<feature type="binding site" evidence="2">
    <location>
        <position position="356"/>
    </location>
    <ligand>
        <name>FAD</name>
        <dbReference type="ChEBI" id="CHEBI:57692"/>
    </ligand>
</feature>
<feature type="binding site" evidence="2">
    <location>
        <begin position="386"/>
        <end position="389"/>
    </location>
    <ligand>
        <name>FAD</name>
        <dbReference type="ChEBI" id="CHEBI:57692"/>
    </ligand>
</feature>
<feature type="binding site" evidence="2">
    <location>
        <begin position="404"/>
        <end position="406"/>
    </location>
    <ligand>
        <name>FAD</name>
        <dbReference type="ChEBI" id="CHEBI:57692"/>
    </ligand>
</feature>
<feature type="binding site" evidence="2">
    <location>
        <position position="410"/>
    </location>
    <ligand>
        <name>FAD</name>
        <dbReference type="ChEBI" id="CHEBI:57692"/>
    </ligand>
</feature>
<feature type="binding site" evidence="2">
    <location>
        <begin position="419"/>
        <end position="422"/>
    </location>
    <ligand>
        <name>FAD</name>
        <dbReference type="ChEBI" id="CHEBI:57692"/>
    </ligand>
</feature>
<feature type="binding site" evidence="2">
    <location>
        <begin position="519"/>
        <end position="520"/>
    </location>
    <ligand>
        <name>NADP(+)</name>
        <dbReference type="ChEBI" id="CHEBI:58349"/>
    </ligand>
</feature>
<feature type="binding site" evidence="2">
    <location>
        <begin position="525"/>
        <end position="529"/>
    </location>
    <ligand>
        <name>NADP(+)</name>
        <dbReference type="ChEBI" id="CHEBI:58349"/>
    </ligand>
</feature>
<feature type="binding site" evidence="2">
    <location>
        <position position="561"/>
    </location>
    <ligand>
        <name>NADP(+)</name>
        <dbReference type="ChEBI" id="CHEBI:58349"/>
    </ligand>
</feature>
<feature type="binding site" evidence="2">
    <location>
        <position position="599"/>
    </location>
    <ligand>
        <name>FAD</name>
        <dbReference type="ChEBI" id="CHEBI:57692"/>
    </ligand>
</feature>
<reference key="1">
    <citation type="journal article" date="2004" name="Nat. Genet.">
        <title>Comparison of genome degradation in Paratyphi A and Typhi, human-restricted serovars of Salmonella enterica that cause typhoid.</title>
        <authorList>
            <person name="McClelland M."/>
            <person name="Sanderson K.E."/>
            <person name="Clifton S.W."/>
            <person name="Latreille P."/>
            <person name="Porwollik S."/>
            <person name="Sabo A."/>
            <person name="Meyer R."/>
            <person name="Bieri T."/>
            <person name="Ozersky P."/>
            <person name="McLellan M."/>
            <person name="Harkins C.R."/>
            <person name="Wang C."/>
            <person name="Nguyen C."/>
            <person name="Berghoff A."/>
            <person name="Elliott G."/>
            <person name="Kohlberg S."/>
            <person name="Strong C."/>
            <person name="Du F."/>
            <person name="Carter J."/>
            <person name="Kremizki C."/>
            <person name="Layman D."/>
            <person name="Leonard S."/>
            <person name="Sun H."/>
            <person name="Fulton L."/>
            <person name="Nash W."/>
            <person name="Miner T."/>
            <person name="Minx P."/>
            <person name="Delehaunty K."/>
            <person name="Fronick C."/>
            <person name="Magrini V."/>
            <person name="Nhan M."/>
            <person name="Warren W."/>
            <person name="Florea L."/>
            <person name="Spieth J."/>
            <person name="Wilson R.K."/>
        </authorList>
    </citation>
    <scope>NUCLEOTIDE SEQUENCE [LARGE SCALE GENOMIC DNA]</scope>
    <source>
        <strain>ATCC 9150 / SARB42</strain>
    </source>
</reference>
<gene>
    <name evidence="2" type="primary">cysJ</name>
    <name type="ordered locus">SPA2804</name>
</gene>
<protein>
    <recommendedName>
        <fullName evidence="2">Sulfite reductase [NADPH] flavoprotein alpha-component</fullName>
        <shortName evidence="2">SiR-FP</shortName>
        <ecNumber evidence="2">1.8.1.2</ecNumber>
    </recommendedName>
</protein>
<dbReference type="EC" id="1.8.1.2" evidence="2"/>
<dbReference type="EMBL" id="CP000026">
    <property type="protein sequence ID" value="AAV78656.1"/>
    <property type="molecule type" value="Genomic_DNA"/>
</dbReference>
<dbReference type="RefSeq" id="WP_000210904.1">
    <property type="nucleotide sequence ID" value="NC_006511.1"/>
</dbReference>
<dbReference type="SMR" id="Q5PEH7"/>
<dbReference type="KEGG" id="spt:SPA2804"/>
<dbReference type="HOGENOM" id="CLU_001570_17_7_6"/>
<dbReference type="UniPathway" id="UPA00140">
    <property type="reaction ID" value="UER00207"/>
</dbReference>
<dbReference type="Proteomes" id="UP000008185">
    <property type="component" value="Chromosome"/>
</dbReference>
<dbReference type="GO" id="GO:0005829">
    <property type="term" value="C:cytosol"/>
    <property type="evidence" value="ECO:0007669"/>
    <property type="project" value="TreeGrafter"/>
</dbReference>
<dbReference type="GO" id="GO:0050660">
    <property type="term" value="F:flavin adenine dinucleotide binding"/>
    <property type="evidence" value="ECO:0007669"/>
    <property type="project" value="InterPro"/>
</dbReference>
<dbReference type="GO" id="GO:0010181">
    <property type="term" value="F:FMN binding"/>
    <property type="evidence" value="ECO:0007669"/>
    <property type="project" value="InterPro"/>
</dbReference>
<dbReference type="GO" id="GO:0004783">
    <property type="term" value="F:sulfite reductase (NADPH) activity"/>
    <property type="evidence" value="ECO:0007669"/>
    <property type="project" value="UniProtKB-UniRule"/>
</dbReference>
<dbReference type="GO" id="GO:0019344">
    <property type="term" value="P:cysteine biosynthetic process"/>
    <property type="evidence" value="ECO:0007669"/>
    <property type="project" value="UniProtKB-KW"/>
</dbReference>
<dbReference type="GO" id="GO:0070814">
    <property type="term" value="P:hydrogen sulfide biosynthetic process"/>
    <property type="evidence" value="ECO:0007669"/>
    <property type="project" value="UniProtKB-UniRule"/>
</dbReference>
<dbReference type="GO" id="GO:0000103">
    <property type="term" value="P:sulfate assimilation"/>
    <property type="evidence" value="ECO:0007669"/>
    <property type="project" value="UniProtKB-UniRule"/>
</dbReference>
<dbReference type="CDD" id="cd06199">
    <property type="entry name" value="SiR"/>
    <property type="match status" value="1"/>
</dbReference>
<dbReference type="FunFam" id="3.40.50.80:FF:000001">
    <property type="entry name" value="NADPH--cytochrome P450 reductase 1"/>
    <property type="match status" value="1"/>
</dbReference>
<dbReference type="FunFam" id="1.20.990.10:FF:000004">
    <property type="entry name" value="Sulfite reductase [NADPH] flavoprotein alpha-component"/>
    <property type="match status" value="1"/>
</dbReference>
<dbReference type="FunFam" id="3.40.50.360:FF:000018">
    <property type="entry name" value="Sulfite reductase [NADPH] flavoprotein alpha-component"/>
    <property type="match status" value="1"/>
</dbReference>
<dbReference type="Gene3D" id="3.40.50.360">
    <property type="match status" value="1"/>
</dbReference>
<dbReference type="Gene3D" id="1.20.990.10">
    <property type="entry name" value="NADPH-cytochrome p450 Reductase, Chain A, domain 3"/>
    <property type="match status" value="1"/>
</dbReference>
<dbReference type="Gene3D" id="3.40.50.80">
    <property type="entry name" value="Nucleotide-binding domain of ferredoxin-NADP reductase (FNR) module"/>
    <property type="match status" value="1"/>
</dbReference>
<dbReference type="Gene3D" id="2.40.30.10">
    <property type="entry name" value="Translation factors"/>
    <property type="match status" value="1"/>
</dbReference>
<dbReference type="HAMAP" id="MF_01541">
    <property type="entry name" value="CysJ"/>
    <property type="match status" value="1"/>
</dbReference>
<dbReference type="InterPro" id="IPR010199">
    <property type="entry name" value="CysJ"/>
</dbReference>
<dbReference type="InterPro" id="IPR003097">
    <property type="entry name" value="CysJ-like_FAD-binding"/>
</dbReference>
<dbReference type="InterPro" id="IPR029758">
    <property type="entry name" value="CysJ_Proteobact"/>
</dbReference>
<dbReference type="InterPro" id="IPR017927">
    <property type="entry name" value="FAD-bd_FR_type"/>
</dbReference>
<dbReference type="InterPro" id="IPR001094">
    <property type="entry name" value="Flavdoxin-like"/>
</dbReference>
<dbReference type="InterPro" id="IPR008254">
    <property type="entry name" value="Flavodoxin/NO_synth"/>
</dbReference>
<dbReference type="InterPro" id="IPR001709">
    <property type="entry name" value="Flavoprot_Pyr_Nucl_cyt_Rdtase"/>
</dbReference>
<dbReference type="InterPro" id="IPR029039">
    <property type="entry name" value="Flavoprotein-like_sf"/>
</dbReference>
<dbReference type="InterPro" id="IPR039261">
    <property type="entry name" value="FNR_nucleotide-bd"/>
</dbReference>
<dbReference type="InterPro" id="IPR023173">
    <property type="entry name" value="NADPH_Cyt_P450_Rdtase_alpha"/>
</dbReference>
<dbReference type="InterPro" id="IPR001433">
    <property type="entry name" value="OxRdtase_FAD/NAD-bd"/>
</dbReference>
<dbReference type="InterPro" id="IPR017938">
    <property type="entry name" value="Riboflavin_synthase-like_b-brl"/>
</dbReference>
<dbReference type="NCBIfam" id="TIGR01931">
    <property type="entry name" value="cysJ"/>
    <property type="match status" value="1"/>
</dbReference>
<dbReference type="NCBIfam" id="NF008197">
    <property type="entry name" value="PRK10953.1"/>
    <property type="match status" value="1"/>
</dbReference>
<dbReference type="PANTHER" id="PTHR19384:SF128">
    <property type="entry name" value="NADPH OXIDOREDUCTASE A"/>
    <property type="match status" value="1"/>
</dbReference>
<dbReference type="PANTHER" id="PTHR19384">
    <property type="entry name" value="NITRIC OXIDE SYNTHASE-RELATED"/>
    <property type="match status" value="1"/>
</dbReference>
<dbReference type="Pfam" id="PF00667">
    <property type="entry name" value="FAD_binding_1"/>
    <property type="match status" value="1"/>
</dbReference>
<dbReference type="Pfam" id="PF00258">
    <property type="entry name" value="Flavodoxin_1"/>
    <property type="match status" value="1"/>
</dbReference>
<dbReference type="Pfam" id="PF00175">
    <property type="entry name" value="NAD_binding_1"/>
    <property type="match status" value="1"/>
</dbReference>
<dbReference type="PIRSF" id="PIRSF000207">
    <property type="entry name" value="SiR-FP_CysJ"/>
    <property type="match status" value="1"/>
</dbReference>
<dbReference type="PRINTS" id="PR00369">
    <property type="entry name" value="FLAVODOXIN"/>
</dbReference>
<dbReference type="PRINTS" id="PR00371">
    <property type="entry name" value="FPNCR"/>
</dbReference>
<dbReference type="SUPFAM" id="SSF52343">
    <property type="entry name" value="Ferredoxin reductase-like, C-terminal NADP-linked domain"/>
    <property type="match status" value="1"/>
</dbReference>
<dbReference type="SUPFAM" id="SSF52218">
    <property type="entry name" value="Flavoproteins"/>
    <property type="match status" value="1"/>
</dbReference>
<dbReference type="SUPFAM" id="SSF63380">
    <property type="entry name" value="Riboflavin synthase domain-like"/>
    <property type="match status" value="1"/>
</dbReference>
<dbReference type="PROSITE" id="PS51384">
    <property type="entry name" value="FAD_FR"/>
    <property type="match status" value="1"/>
</dbReference>
<dbReference type="PROSITE" id="PS50902">
    <property type="entry name" value="FLAVODOXIN_LIKE"/>
    <property type="match status" value="1"/>
</dbReference>
<sequence>MTTPAPLTGLLPLNPEQLARLQAATTDLTPEQLAWVSGYFWGVLNPRSGAVAVTPAPEGKMPGVTLISASQTGNARRVAEALRDDLLAANLNVTLVNAGDYKFKQIASEKLLVIVTSTQGEGEPPEEAVALHKFLFSKKALKLENTAFAVFSLGDTSYEFFCQSGKDFDSKLAELGGERLLDRVDADVEYQAAASEWRARVVDVLKSRAPVAAPSQSVATGAVNDIHTSPYTKDAPLTATLSVNQKITGRNSEKDVRHIEIDLGDSGLRYQPGDALGVWYQNDPALVKELVELLWLKGDEPVTVDGKTLPLAEALEWHFELTVNTANIVENYATLTRSESLLPLVGDKAQLQHYAATTPIVDMVRFSPAQLDAQALIGLLRPLTPRLYSIASAQAEVESEVHITVGVVRYDIEGRARAGGASSFLAGRVEEEGEVRVFIEHNDNFRLPANPQTPVIMIGPGTGIAPFRAFMQQRAADGAEGKNWLFFGNPHFTEDFLYQVEWQRYVKEGVLNRIDLAWSRDQKEKIYVQDKLREQGAELWRWINDGAHIYVCGDARCMAVDVEKALLEVIAEFGAMDIESADEYLSELRVERRYQRDVY</sequence>